<protein>
    <recommendedName>
        <fullName evidence="1">Hypertrehalosaemic factor</fullName>
    </recommendedName>
    <alternativeName>
        <fullName evidence="4">Adipokinetic hormone 1</fullName>
        <shortName evidence="4">PerBr-AKH-1</shortName>
    </alternativeName>
    <alternativeName>
        <fullName evidence="1">Hypertrehalosaemic neuropeptide</fullName>
    </alternativeName>
</protein>
<evidence type="ECO:0000250" key="1">
    <source>
        <dbReference type="UniProtKB" id="P67790"/>
    </source>
</evidence>
<evidence type="ECO:0000255" key="2"/>
<evidence type="ECO:0000269" key="3">
    <source>
    </source>
</evidence>
<evidence type="ECO:0000303" key="4">
    <source>
    </source>
</evidence>
<evidence type="ECO:0000305" key="5"/>
<reference evidence="5" key="1">
    <citation type="journal article" date="2009" name="BMC Evol. Biol.">
        <title>A proteomic approach for studying insect phylogeny: CAPA peptides of ancient insect taxa (Dictyoptera, Blattoptera) as a test case.</title>
        <authorList>
            <person name="Roth S."/>
            <person name="Fromm B."/>
            <person name="Gaede G."/>
            <person name="Predel R."/>
        </authorList>
    </citation>
    <scope>PROTEIN SEQUENCE</scope>
    <scope>PYROGLUTAMATE FORMATION AT GLN-1</scope>
    <scope>AMIDATION AT TRP-8</scope>
    <source>
        <tissue evidence="3">Corpora cardiaca</tissue>
    </source>
</reference>
<proteinExistence type="evidence at protein level"/>
<comment type="function">
    <text evidence="5">Hypertrehalosaemic factors are neuropeptides that elevate the level of trehalose in the hemolymph (trehalose is the major carbohydrate in the hemolymph of insects).</text>
</comment>
<comment type="subcellular location">
    <subcellularLocation>
        <location evidence="5">Secreted</location>
    </subcellularLocation>
</comment>
<comment type="similarity">
    <text evidence="2">Belongs to the AKH/HRTH/RPCH family.</text>
</comment>
<organism>
    <name type="scientific">Periplaneta brunnea</name>
    <name type="common">Brown cockroach</name>
    <dbReference type="NCBI Taxonomy" id="36976"/>
    <lineage>
        <taxon>Eukaryota</taxon>
        <taxon>Metazoa</taxon>
        <taxon>Ecdysozoa</taxon>
        <taxon>Arthropoda</taxon>
        <taxon>Hexapoda</taxon>
        <taxon>Insecta</taxon>
        <taxon>Pterygota</taxon>
        <taxon>Neoptera</taxon>
        <taxon>Polyneoptera</taxon>
        <taxon>Dictyoptera</taxon>
        <taxon>Blattodea</taxon>
        <taxon>Blattoidea</taxon>
        <taxon>Blattidae</taxon>
        <taxon>Blattinae</taxon>
        <taxon>Periplaneta</taxon>
    </lineage>
</organism>
<name>HTF_PERBR</name>
<feature type="peptide" id="PRO_0000378663" description="Hypertrehalosaemic factor" evidence="3">
    <location>
        <begin position="1"/>
        <end position="8"/>
    </location>
</feature>
<feature type="modified residue" description="Pyrrolidone carboxylic acid" evidence="3">
    <location>
        <position position="1"/>
    </location>
</feature>
<feature type="modified residue" description="Tryptophan amide" evidence="3">
    <location>
        <position position="8"/>
    </location>
</feature>
<dbReference type="GO" id="GO:0005576">
    <property type="term" value="C:extracellular region"/>
    <property type="evidence" value="ECO:0007669"/>
    <property type="project" value="UniProtKB-SubCell"/>
</dbReference>
<dbReference type="GO" id="GO:0005179">
    <property type="term" value="F:hormone activity"/>
    <property type="evidence" value="ECO:0007669"/>
    <property type="project" value="UniProtKB-KW"/>
</dbReference>
<dbReference type="GO" id="GO:0007218">
    <property type="term" value="P:neuropeptide signaling pathway"/>
    <property type="evidence" value="ECO:0007669"/>
    <property type="project" value="UniProtKB-KW"/>
</dbReference>
<dbReference type="InterPro" id="IPR002047">
    <property type="entry name" value="Adipokinetic_hormone_CS"/>
</dbReference>
<dbReference type="PROSITE" id="PS00256">
    <property type="entry name" value="AKH"/>
    <property type="match status" value="1"/>
</dbReference>
<sequence>QVNFSPNW</sequence>
<keyword id="KW-0027">Amidation</keyword>
<keyword id="KW-0903">Direct protein sequencing</keyword>
<keyword id="KW-0372">Hormone</keyword>
<keyword id="KW-0527">Neuropeptide</keyword>
<keyword id="KW-0873">Pyrrolidone carboxylic acid</keyword>
<keyword id="KW-0964">Secreted</keyword>
<accession>P85711</accession>